<name>TRML_SACD2</name>
<evidence type="ECO:0000255" key="1">
    <source>
        <dbReference type="HAMAP-Rule" id="MF_01885"/>
    </source>
</evidence>
<evidence type="ECO:0000305" key="2"/>
<dbReference type="EC" id="2.1.1.207" evidence="1"/>
<dbReference type="EMBL" id="CP000282">
    <property type="protein sequence ID" value="ABD80392.1"/>
    <property type="status" value="ALT_INIT"/>
    <property type="molecule type" value="Genomic_DNA"/>
</dbReference>
<dbReference type="RefSeq" id="WP_041325345.1">
    <property type="nucleotide sequence ID" value="NC_007912.1"/>
</dbReference>
<dbReference type="SMR" id="Q21LN7"/>
<dbReference type="STRING" id="203122.Sde_1130"/>
<dbReference type="GeneID" id="98612810"/>
<dbReference type="KEGG" id="sde:Sde_1130"/>
<dbReference type="eggNOG" id="COG0219">
    <property type="taxonomic scope" value="Bacteria"/>
</dbReference>
<dbReference type="HOGENOM" id="CLU_110125_1_0_6"/>
<dbReference type="OrthoDB" id="9789043at2"/>
<dbReference type="Proteomes" id="UP000001947">
    <property type="component" value="Chromosome"/>
</dbReference>
<dbReference type="GO" id="GO:0005737">
    <property type="term" value="C:cytoplasm"/>
    <property type="evidence" value="ECO:0007669"/>
    <property type="project" value="UniProtKB-SubCell"/>
</dbReference>
<dbReference type="GO" id="GO:0003723">
    <property type="term" value="F:RNA binding"/>
    <property type="evidence" value="ECO:0007669"/>
    <property type="project" value="InterPro"/>
</dbReference>
<dbReference type="GO" id="GO:0141102">
    <property type="term" value="F:tRNA (5-carboxymethylaminomethyluridine(34)-2'-O)-methyltransferase activity"/>
    <property type="evidence" value="ECO:0007669"/>
    <property type="project" value="RHEA"/>
</dbReference>
<dbReference type="GO" id="GO:0141098">
    <property type="term" value="F:tRNA (cytidine(34)-2'-O)-methyltransferase activity"/>
    <property type="evidence" value="ECO:0007669"/>
    <property type="project" value="RHEA"/>
</dbReference>
<dbReference type="GO" id="GO:0002131">
    <property type="term" value="P:wobble position cytosine ribose methylation"/>
    <property type="evidence" value="ECO:0007669"/>
    <property type="project" value="TreeGrafter"/>
</dbReference>
<dbReference type="GO" id="GO:0002132">
    <property type="term" value="P:wobble position uridine ribose methylation"/>
    <property type="evidence" value="ECO:0007669"/>
    <property type="project" value="TreeGrafter"/>
</dbReference>
<dbReference type="CDD" id="cd18094">
    <property type="entry name" value="SpoU-like_TrmL"/>
    <property type="match status" value="1"/>
</dbReference>
<dbReference type="FunFam" id="3.40.1280.10:FF:000002">
    <property type="entry name" value="Peptidylprolyl isomerase"/>
    <property type="match status" value="1"/>
</dbReference>
<dbReference type="Gene3D" id="3.40.1280.10">
    <property type="match status" value="1"/>
</dbReference>
<dbReference type="HAMAP" id="MF_01885">
    <property type="entry name" value="tRNA_methyltr_TrmL"/>
    <property type="match status" value="1"/>
</dbReference>
<dbReference type="InterPro" id="IPR029028">
    <property type="entry name" value="Alpha/beta_knot_MTases"/>
</dbReference>
<dbReference type="InterPro" id="IPR001537">
    <property type="entry name" value="SpoU_MeTrfase"/>
</dbReference>
<dbReference type="InterPro" id="IPR016914">
    <property type="entry name" value="TrmL"/>
</dbReference>
<dbReference type="InterPro" id="IPR029026">
    <property type="entry name" value="tRNA_m1G_MTases_N"/>
</dbReference>
<dbReference type="NCBIfam" id="TIGR00185">
    <property type="entry name" value="tRNA_yibK_trmL"/>
    <property type="match status" value="1"/>
</dbReference>
<dbReference type="PANTHER" id="PTHR42971">
    <property type="entry name" value="TRNA (CYTIDINE(34)-2'-O)-METHYLTRANSFERASE"/>
    <property type="match status" value="1"/>
</dbReference>
<dbReference type="PANTHER" id="PTHR42971:SF1">
    <property type="entry name" value="TRNA (CYTIDINE(34)-2'-O)-METHYLTRANSFERASE"/>
    <property type="match status" value="1"/>
</dbReference>
<dbReference type="Pfam" id="PF00588">
    <property type="entry name" value="SpoU_methylase"/>
    <property type="match status" value="1"/>
</dbReference>
<dbReference type="PIRSF" id="PIRSF029256">
    <property type="entry name" value="SpoU_TrmH_prd"/>
    <property type="match status" value="1"/>
</dbReference>
<dbReference type="SUPFAM" id="SSF75217">
    <property type="entry name" value="alpha/beta knot"/>
    <property type="match status" value="1"/>
</dbReference>
<proteinExistence type="inferred from homology"/>
<comment type="function">
    <text evidence="1">Methylates the ribose at the nucleotide 34 wobble position in the two leucyl isoacceptors tRNA(Leu)(CmAA) and tRNA(Leu)(cmnm5UmAA). Catalyzes the methyl transfer from S-adenosyl-L-methionine to the 2'-OH of the wobble nucleotide.</text>
</comment>
<comment type="catalytic activity">
    <reaction evidence="1">
        <text>cytidine(34) in tRNA + S-adenosyl-L-methionine = 2'-O-methylcytidine(34) in tRNA + S-adenosyl-L-homocysteine + H(+)</text>
        <dbReference type="Rhea" id="RHEA:43084"/>
        <dbReference type="Rhea" id="RHEA-COMP:10331"/>
        <dbReference type="Rhea" id="RHEA-COMP:10332"/>
        <dbReference type="ChEBI" id="CHEBI:15378"/>
        <dbReference type="ChEBI" id="CHEBI:57856"/>
        <dbReference type="ChEBI" id="CHEBI:59789"/>
        <dbReference type="ChEBI" id="CHEBI:74495"/>
        <dbReference type="ChEBI" id="CHEBI:82748"/>
        <dbReference type="EC" id="2.1.1.207"/>
    </reaction>
</comment>
<comment type="catalytic activity">
    <reaction evidence="1">
        <text>5-carboxymethylaminomethyluridine(34) in tRNA(Leu) + S-adenosyl-L-methionine = 5-carboxymethylaminomethyl-2'-O-methyluridine(34) in tRNA(Leu) + S-adenosyl-L-homocysteine + H(+)</text>
        <dbReference type="Rhea" id="RHEA:43088"/>
        <dbReference type="Rhea" id="RHEA-COMP:10333"/>
        <dbReference type="Rhea" id="RHEA-COMP:10334"/>
        <dbReference type="ChEBI" id="CHEBI:15378"/>
        <dbReference type="ChEBI" id="CHEBI:57856"/>
        <dbReference type="ChEBI" id="CHEBI:59789"/>
        <dbReference type="ChEBI" id="CHEBI:74508"/>
        <dbReference type="ChEBI" id="CHEBI:74511"/>
        <dbReference type="EC" id="2.1.1.207"/>
    </reaction>
</comment>
<comment type="subunit">
    <text evidence="1">Homodimer.</text>
</comment>
<comment type="subcellular location">
    <subcellularLocation>
        <location evidence="1">Cytoplasm</location>
    </subcellularLocation>
</comment>
<comment type="similarity">
    <text evidence="1">Belongs to the class IV-like SAM-binding methyltransferase superfamily. RNA methyltransferase TrmH family. TrmL subfamily.</text>
</comment>
<comment type="sequence caution" evidence="2">
    <conflict type="erroneous initiation">
        <sequence resource="EMBL-CDS" id="ABD80392"/>
    </conflict>
    <text>Extended N-terminus.</text>
</comment>
<protein>
    <recommendedName>
        <fullName evidence="1">tRNA (cytidine(34)-2'-O)-methyltransferase</fullName>
        <ecNumber evidence="1">2.1.1.207</ecNumber>
    </recommendedName>
    <alternativeName>
        <fullName evidence="1">tRNA (cytidine/uridine-2'-O-)-methyltransferase TrmL</fullName>
    </alternativeName>
</protein>
<feature type="chain" id="PRO_0000401951" description="tRNA (cytidine(34)-2'-O)-methyltransferase">
    <location>
        <begin position="1"/>
        <end position="154"/>
    </location>
</feature>
<feature type="binding site" evidence="1">
    <location>
        <position position="78"/>
    </location>
    <ligand>
        <name>S-adenosyl-L-methionine</name>
        <dbReference type="ChEBI" id="CHEBI:59789"/>
    </ligand>
</feature>
<feature type="binding site" evidence="1">
    <location>
        <position position="100"/>
    </location>
    <ligand>
        <name>S-adenosyl-L-methionine</name>
        <dbReference type="ChEBI" id="CHEBI:59789"/>
    </ligand>
</feature>
<feature type="binding site" evidence="1">
    <location>
        <position position="122"/>
    </location>
    <ligand>
        <name>S-adenosyl-L-methionine</name>
        <dbReference type="ChEBI" id="CHEBI:59789"/>
    </ligand>
</feature>
<feature type="binding site" evidence="1">
    <location>
        <position position="130"/>
    </location>
    <ligand>
        <name>S-adenosyl-L-methionine</name>
        <dbReference type="ChEBI" id="CHEBI:59789"/>
    </ligand>
</feature>
<keyword id="KW-0963">Cytoplasm</keyword>
<keyword id="KW-0489">Methyltransferase</keyword>
<keyword id="KW-1185">Reference proteome</keyword>
<keyword id="KW-0949">S-adenosyl-L-methionine</keyword>
<keyword id="KW-0808">Transferase</keyword>
<keyword id="KW-0819">tRNA processing</keyword>
<gene>
    <name evidence="1" type="primary">trmL</name>
    <name type="ordered locus">Sde_1130</name>
</gene>
<sequence>MFNIVLFEPEIPPNTGNIIRVCANTGCRLHLIEPLGFELDDKRLRRAGLDYGEWQSVVTHANWDAFIKQQAPERLWALSTKGTKFHHEVSIGEGDYLVFGPETRGLPMEILEYITFDNVLRIPMLPNSRSMNLSNAASVMVYEAWRQLGFAGSK</sequence>
<reference key="1">
    <citation type="journal article" date="2008" name="PLoS Genet.">
        <title>Complete genome sequence of the complex carbohydrate-degrading marine bacterium, Saccharophagus degradans strain 2-40 T.</title>
        <authorList>
            <person name="Weiner R.M."/>
            <person name="Taylor L.E. II"/>
            <person name="Henrissat B."/>
            <person name="Hauser L."/>
            <person name="Land M."/>
            <person name="Coutinho P.M."/>
            <person name="Rancurel C."/>
            <person name="Saunders E.H."/>
            <person name="Longmire A.G."/>
            <person name="Zhang H."/>
            <person name="Bayer E.A."/>
            <person name="Gilbert H.J."/>
            <person name="Larimer F."/>
            <person name="Zhulin I.B."/>
            <person name="Ekborg N.A."/>
            <person name="Lamed R."/>
            <person name="Richardson P.M."/>
            <person name="Borovok I."/>
            <person name="Hutcheson S."/>
        </authorList>
    </citation>
    <scope>NUCLEOTIDE SEQUENCE [LARGE SCALE GENOMIC DNA]</scope>
    <source>
        <strain>2-40 / ATCC 43961 / DSM 17024</strain>
    </source>
</reference>
<accession>Q21LN7</accession>
<organism>
    <name type="scientific">Saccharophagus degradans (strain 2-40 / ATCC 43961 / DSM 17024)</name>
    <dbReference type="NCBI Taxonomy" id="203122"/>
    <lineage>
        <taxon>Bacteria</taxon>
        <taxon>Pseudomonadati</taxon>
        <taxon>Pseudomonadota</taxon>
        <taxon>Gammaproteobacteria</taxon>
        <taxon>Cellvibrionales</taxon>
        <taxon>Cellvibrionaceae</taxon>
        <taxon>Saccharophagus</taxon>
    </lineage>
</organism>